<comment type="function">
    <text evidence="1">Zinc phosphodiesterase, which displays some tRNA 3'-processing endonuclease activity. Probably involved in tRNA maturation, by removing a 3'-trailer from precursor tRNA.</text>
</comment>
<comment type="catalytic activity">
    <reaction evidence="1">
        <text>Endonucleolytic cleavage of RNA, removing extra 3' nucleotides from tRNA precursor, generating 3' termini of tRNAs. A 3'-hydroxy group is left at the tRNA terminus and a 5'-phosphoryl group is left at the trailer molecule.</text>
        <dbReference type="EC" id="3.1.26.11"/>
    </reaction>
</comment>
<comment type="cofactor">
    <cofactor evidence="1">
        <name>Zn(2+)</name>
        <dbReference type="ChEBI" id="CHEBI:29105"/>
    </cofactor>
    <text evidence="1">Binds 2 Zn(2+) ions.</text>
</comment>
<comment type="subunit">
    <text evidence="1">Homodimer.</text>
</comment>
<comment type="similarity">
    <text evidence="1">Belongs to the RNase Z family.</text>
</comment>
<sequence>MELEFLGTCSGQPSKLRNVSSLALKLLDELNEIWLFDCGEATQHQILRTNIRLRKITKIFISHNHGDHIFGLPGLLSTRSFQGDVGPLTIYGPAGIEQFVKTSLRISKTKISYPIKFVTLEEGGKIVSERGFEVYTEKLDHRIDSWGFRMVEADKAGELLMDKLAEFKVPNGPLLGKLKRGEQVELADGTVLNGKDFLGPAKKGRVVTVIYDTRSTPSIRRLADHADVLVHEATFDASEGKLARDYYHSTCTQAAETASACHVGHLYLTHVSARYVGSLASQMVKQAREIFPATTLAKDLDKFVVPMKG</sequence>
<dbReference type="EC" id="3.1.26.11" evidence="1"/>
<dbReference type="EMBL" id="CR954253">
    <property type="protein sequence ID" value="CAI97642.1"/>
    <property type="molecule type" value="Genomic_DNA"/>
</dbReference>
<dbReference type="RefSeq" id="WP_003619785.1">
    <property type="nucleotide sequence ID" value="NZ_JQAV01000019.1"/>
</dbReference>
<dbReference type="SMR" id="Q1GAM2"/>
<dbReference type="STRING" id="390333.Ldb0820"/>
<dbReference type="KEGG" id="ldb:Ldb0820"/>
<dbReference type="PATRIC" id="fig|390333.13.peg.897"/>
<dbReference type="eggNOG" id="COG1234">
    <property type="taxonomic scope" value="Bacteria"/>
</dbReference>
<dbReference type="HOGENOM" id="CLU_031317_2_0_9"/>
<dbReference type="BioCyc" id="LDEL390333:LDB_RS03605-MONOMER"/>
<dbReference type="Proteomes" id="UP000001259">
    <property type="component" value="Chromosome"/>
</dbReference>
<dbReference type="GO" id="GO:0042781">
    <property type="term" value="F:3'-tRNA processing endoribonuclease activity"/>
    <property type="evidence" value="ECO:0007669"/>
    <property type="project" value="UniProtKB-UniRule"/>
</dbReference>
<dbReference type="GO" id="GO:0008270">
    <property type="term" value="F:zinc ion binding"/>
    <property type="evidence" value="ECO:0007669"/>
    <property type="project" value="UniProtKB-UniRule"/>
</dbReference>
<dbReference type="CDD" id="cd07717">
    <property type="entry name" value="RNaseZ_ZiPD-like_MBL-fold"/>
    <property type="match status" value="1"/>
</dbReference>
<dbReference type="FunFam" id="3.60.15.10:FF:000002">
    <property type="entry name" value="Ribonuclease Z"/>
    <property type="match status" value="1"/>
</dbReference>
<dbReference type="Gene3D" id="3.60.15.10">
    <property type="entry name" value="Ribonuclease Z/Hydroxyacylglutathione hydrolase-like"/>
    <property type="match status" value="1"/>
</dbReference>
<dbReference type="HAMAP" id="MF_01818">
    <property type="entry name" value="RNase_Z_BN"/>
    <property type="match status" value="1"/>
</dbReference>
<dbReference type="InterPro" id="IPR001279">
    <property type="entry name" value="Metallo-B-lactamas"/>
</dbReference>
<dbReference type="InterPro" id="IPR036866">
    <property type="entry name" value="RibonucZ/Hydroxyglut_hydro"/>
</dbReference>
<dbReference type="InterPro" id="IPR013471">
    <property type="entry name" value="RNase_Z/BN"/>
</dbReference>
<dbReference type="NCBIfam" id="NF000801">
    <property type="entry name" value="PRK00055.1-3"/>
    <property type="match status" value="1"/>
</dbReference>
<dbReference type="NCBIfam" id="TIGR02651">
    <property type="entry name" value="RNase_Z"/>
    <property type="match status" value="1"/>
</dbReference>
<dbReference type="PANTHER" id="PTHR46018">
    <property type="entry name" value="ZINC PHOSPHODIESTERASE ELAC PROTEIN 1"/>
    <property type="match status" value="1"/>
</dbReference>
<dbReference type="PANTHER" id="PTHR46018:SF2">
    <property type="entry name" value="ZINC PHOSPHODIESTERASE ELAC PROTEIN 1"/>
    <property type="match status" value="1"/>
</dbReference>
<dbReference type="Pfam" id="PF00753">
    <property type="entry name" value="Lactamase_B"/>
    <property type="match status" value="1"/>
</dbReference>
<dbReference type="SUPFAM" id="SSF56281">
    <property type="entry name" value="Metallo-hydrolase/oxidoreductase"/>
    <property type="match status" value="1"/>
</dbReference>
<protein>
    <recommendedName>
        <fullName evidence="1">Ribonuclease Z</fullName>
        <shortName evidence="1">RNase Z</shortName>
        <ecNumber evidence="1">3.1.26.11</ecNumber>
    </recommendedName>
    <alternativeName>
        <fullName evidence="1">tRNA 3 endonuclease</fullName>
    </alternativeName>
    <alternativeName>
        <fullName evidence="1">tRNase Z</fullName>
    </alternativeName>
</protein>
<reference key="1">
    <citation type="journal article" date="2006" name="Proc. Natl. Acad. Sci. U.S.A.">
        <title>The complete genome sequence of Lactobacillus bulgaricus reveals extensive and ongoing reductive evolution.</title>
        <authorList>
            <person name="van de Guchte M."/>
            <person name="Penaud S."/>
            <person name="Grimaldi C."/>
            <person name="Barbe V."/>
            <person name="Bryson K."/>
            <person name="Nicolas P."/>
            <person name="Robert C."/>
            <person name="Oztas S."/>
            <person name="Mangenot S."/>
            <person name="Couloux A."/>
            <person name="Loux V."/>
            <person name="Dervyn R."/>
            <person name="Bossy R."/>
            <person name="Bolotin A."/>
            <person name="Batto J.-M."/>
            <person name="Walunas T."/>
            <person name="Gibrat J.-F."/>
            <person name="Bessieres P."/>
            <person name="Weissenbach J."/>
            <person name="Ehrlich S.D."/>
            <person name="Maguin E."/>
        </authorList>
    </citation>
    <scope>NUCLEOTIDE SEQUENCE [LARGE SCALE GENOMIC DNA]</scope>
    <source>
        <strain>ATCC 11842 / DSM 20081 / BCRC 10696 / JCM 1002 / NBRC 13953 / NCIMB 11778 / NCTC 12712 / WDCM 00102 / Lb 14</strain>
    </source>
</reference>
<evidence type="ECO:0000255" key="1">
    <source>
        <dbReference type="HAMAP-Rule" id="MF_01818"/>
    </source>
</evidence>
<organism>
    <name type="scientific">Lactobacillus delbrueckii subsp. bulgaricus (strain ATCC 11842 / DSM 20081 / BCRC 10696 / JCM 1002 / NBRC 13953 / NCIMB 11778 / NCTC 12712 / WDCM 00102 / Lb 14)</name>
    <dbReference type="NCBI Taxonomy" id="390333"/>
    <lineage>
        <taxon>Bacteria</taxon>
        <taxon>Bacillati</taxon>
        <taxon>Bacillota</taxon>
        <taxon>Bacilli</taxon>
        <taxon>Lactobacillales</taxon>
        <taxon>Lactobacillaceae</taxon>
        <taxon>Lactobacillus</taxon>
    </lineage>
</organism>
<proteinExistence type="inferred from homology"/>
<gene>
    <name evidence="1" type="primary">rnz</name>
    <name type="ordered locus">Ldb0820</name>
</gene>
<feature type="chain" id="PRO_1000070286" description="Ribonuclease Z">
    <location>
        <begin position="1"/>
        <end position="309"/>
    </location>
</feature>
<feature type="active site" description="Proton acceptor" evidence="1">
    <location>
        <position position="67"/>
    </location>
</feature>
<feature type="binding site" evidence="1">
    <location>
        <position position="63"/>
    </location>
    <ligand>
        <name>Zn(2+)</name>
        <dbReference type="ChEBI" id="CHEBI:29105"/>
        <label>1</label>
        <note>catalytic</note>
    </ligand>
</feature>
<feature type="binding site" evidence="1">
    <location>
        <position position="65"/>
    </location>
    <ligand>
        <name>Zn(2+)</name>
        <dbReference type="ChEBI" id="CHEBI:29105"/>
        <label>1</label>
        <note>catalytic</note>
    </ligand>
</feature>
<feature type="binding site" evidence="1">
    <location>
        <position position="67"/>
    </location>
    <ligand>
        <name>Zn(2+)</name>
        <dbReference type="ChEBI" id="CHEBI:29105"/>
        <label>2</label>
        <note>catalytic</note>
    </ligand>
</feature>
<feature type="binding site" evidence="1">
    <location>
        <position position="68"/>
    </location>
    <ligand>
        <name>Zn(2+)</name>
        <dbReference type="ChEBI" id="CHEBI:29105"/>
        <label>2</label>
        <note>catalytic</note>
    </ligand>
</feature>
<feature type="binding site" evidence="1">
    <location>
        <position position="141"/>
    </location>
    <ligand>
        <name>Zn(2+)</name>
        <dbReference type="ChEBI" id="CHEBI:29105"/>
        <label>1</label>
        <note>catalytic</note>
    </ligand>
</feature>
<feature type="binding site" evidence="1">
    <location>
        <position position="212"/>
    </location>
    <ligand>
        <name>Zn(2+)</name>
        <dbReference type="ChEBI" id="CHEBI:29105"/>
        <label>1</label>
        <note>catalytic</note>
    </ligand>
</feature>
<feature type="binding site" evidence="1">
    <location>
        <position position="212"/>
    </location>
    <ligand>
        <name>Zn(2+)</name>
        <dbReference type="ChEBI" id="CHEBI:29105"/>
        <label>2</label>
        <note>catalytic</note>
    </ligand>
</feature>
<feature type="binding site" evidence="1">
    <location>
        <position position="270"/>
    </location>
    <ligand>
        <name>Zn(2+)</name>
        <dbReference type="ChEBI" id="CHEBI:29105"/>
        <label>2</label>
        <note>catalytic</note>
    </ligand>
</feature>
<keyword id="KW-0255">Endonuclease</keyword>
<keyword id="KW-0378">Hydrolase</keyword>
<keyword id="KW-0479">Metal-binding</keyword>
<keyword id="KW-0540">Nuclease</keyword>
<keyword id="KW-1185">Reference proteome</keyword>
<keyword id="KW-0819">tRNA processing</keyword>
<keyword id="KW-0862">Zinc</keyword>
<name>RNZ_LACDA</name>
<accession>Q1GAM2</accession>